<sequence>MSKEFEVPRSVEWEENHINILNQQKLPAETVFEHLYTKEDVYDAIVTLKVRGAPAIGITAAFGLALSAQDIETEDIDVFKQEVIQIKEYLNSARPTAVNLAWALERLLRRIERAASVNAAKTDLVHEAIQIQIEDEETCRQIGQNALQLFKSGDRIMTICNAGSIATSRYGTALAPFYLAKKKNLDLHIYACETRPVLQGARLTTWELMQGGVDVTLITDNMAAHTMKEKQISAVIVGADRIARNGDAANKIGTLSLAILAKHFQIPFFIAAPLSTFDVSTKDGSDIPIEERDPLEVKEFNGVQIAPPDVQVFNPAFDVTPHHLISGIITEKGIITSNYTEEIDALFAENISL</sequence>
<proteinExistence type="inferred from homology"/>
<dbReference type="EC" id="5.3.1.23" evidence="1"/>
<dbReference type="EMBL" id="CP000813">
    <property type="protein sequence ID" value="ABV61932.1"/>
    <property type="molecule type" value="Genomic_DNA"/>
</dbReference>
<dbReference type="RefSeq" id="WP_012009732.1">
    <property type="nucleotide sequence ID" value="NZ_VEIA01000024.1"/>
</dbReference>
<dbReference type="SMR" id="A8FCG5"/>
<dbReference type="STRING" id="315750.BPUM_1249"/>
<dbReference type="GeneID" id="5620510"/>
<dbReference type="KEGG" id="bpu:BPUM_1249"/>
<dbReference type="eggNOG" id="COG0182">
    <property type="taxonomic scope" value="Bacteria"/>
</dbReference>
<dbReference type="HOGENOM" id="CLU_016218_1_2_9"/>
<dbReference type="OrthoDB" id="9803436at2"/>
<dbReference type="UniPathway" id="UPA00904">
    <property type="reaction ID" value="UER00874"/>
</dbReference>
<dbReference type="Proteomes" id="UP000001355">
    <property type="component" value="Chromosome"/>
</dbReference>
<dbReference type="GO" id="GO:0046523">
    <property type="term" value="F:S-methyl-5-thioribose-1-phosphate isomerase activity"/>
    <property type="evidence" value="ECO:0007669"/>
    <property type="project" value="UniProtKB-UniRule"/>
</dbReference>
<dbReference type="GO" id="GO:0019509">
    <property type="term" value="P:L-methionine salvage from methylthioadenosine"/>
    <property type="evidence" value="ECO:0007669"/>
    <property type="project" value="UniProtKB-UniRule"/>
</dbReference>
<dbReference type="FunFam" id="1.20.120.420:FF:000003">
    <property type="entry name" value="Methylthioribose-1-phosphate isomerase"/>
    <property type="match status" value="1"/>
</dbReference>
<dbReference type="FunFam" id="3.40.50.10470:FF:000006">
    <property type="entry name" value="Methylthioribose-1-phosphate isomerase"/>
    <property type="match status" value="1"/>
</dbReference>
<dbReference type="Gene3D" id="1.20.120.420">
    <property type="entry name" value="translation initiation factor eif-2b, domain 1"/>
    <property type="match status" value="1"/>
</dbReference>
<dbReference type="Gene3D" id="3.40.50.10470">
    <property type="entry name" value="Translation initiation factor eif-2b, domain 2"/>
    <property type="match status" value="1"/>
</dbReference>
<dbReference type="HAMAP" id="MF_01678">
    <property type="entry name" value="Salvage_MtnA"/>
    <property type="match status" value="1"/>
</dbReference>
<dbReference type="InterPro" id="IPR000649">
    <property type="entry name" value="IF-2B-related"/>
</dbReference>
<dbReference type="InterPro" id="IPR005251">
    <property type="entry name" value="IF-M1Pi"/>
</dbReference>
<dbReference type="InterPro" id="IPR042529">
    <property type="entry name" value="IF_2B-like_C"/>
</dbReference>
<dbReference type="InterPro" id="IPR011559">
    <property type="entry name" value="Initiation_fac_2B_a/b/d"/>
</dbReference>
<dbReference type="InterPro" id="IPR027363">
    <property type="entry name" value="M1Pi_N"/>
</dbReference>
<dbReference type="InterPro" id="IPR037171">
    <property type="entry name" value="NagB/RpiA_transferase-like"/>
</dbReference>
<dbReference type="NCBIfam" id="TIGR00524">
    <property type="entry name" value="eIF-2B_rel"/>
    <property type="match status" value="1"/>
</dbReference>
<dbReference type="NCBIfam" id="NF004326">
    <property type="entry name" value="PRK05720.1"/>
    <property type="match status" value="1"/>
</dbReference>
<dbReference type="NCBIfam" id="TIGR00512">
    <property type="entry name" value="salvage_mtnA"/>
    <property type="match status" value="1"/>
</dbReference>
<dbReference type="PANTHER" id="PTHR43475">
    <property type="entry name" value="METHYLTHIORIBOSE-1-PHOSPHATE ISOMERASE"/>
    <property type="match status" value="1"/>
</dbReference>
<dbReference type="PANTHER" id="PTHR43475:SF4">
    <property type="entry name" value="METHYLTHIORIBOSE-1-PHOSPHATE ISOMERASE"/>
    <property type="match status" value="1"/>
</dbReference>
<dbReference type="Pfam" id="PF01008">
    <property type="entry name" value="IF-2B"/>
    <property type="match status" value="1"/>
</dbReference>
<dbReference type="SUPFAM" id="SSF100950">
    <property type="entry name" value="NagB/RpiA/CoA transferase-like"/>
    <property type="match status" value="1"/>
</dbReference>
<feature type="chain" id="PRO_0000357150" description="Methylthioribose-1-phosphate isomerase">
    <location>
        <begin position="1"/>
        <end position="353"/>
    </location>
</feature>
<feature type="active site" description="Proton donor" evidence="1">
    <location>
        <position position="240"/>
    </location>
</feature>
<feature type="binding site" evidence="1">
    <location>
        <begin position="51"/>
        <end position="53"/>
    </location>
    <ligand>
        <name>substrate</name>
    </ligand>
</feature>
<feature type="binding site" evidence="1">
    <location>
        <position position="94"/>
    </location>
    <ligand>
        <name>substrate</name>
    </ligand>
</feature>
<feature type="binding site" evidence="1">
    <location>
        <position position="199"/>
    </location>
    <ligand>
        <name>substrate</name>
    </ligand>
</feature>
<feature type="binding site" evidence="1">
    <location>
        <begin position="250"/>
        <end position="251"/>
    </location>
    <ligand>
        <name>substrate</name>
    </ligand>
</feature>
<feature type="site" description="Transition state stabilizer" evidence="1">
    <location>
        <position position="160"/>
    </location>
</feature>
<evidence type="ECO:0000255" key="1">
    <source>
        <dbReference type="HAMAP-Rule" id="MF_01678"/>
    </source>
</evidence>
<evidence type="ECO:0000305" key="2"/>
<gene>
    <name evidence="1" type="primary">mtnA</name>
    <name type="ordered locus">BPUM_1249</name>
</gene>
<name>MTNA_BACP2</name>
<comment type="function">
    <text evidence="1">Catalyzes the interconversion of methylthioribose-1-phosphate (MTR-1-P) into methylthioribulose-1-phosphate (MTRu-1-P).</text>
</comment>
<comment type="catalytic activity">
    <reaction evidence="1">
        <text>5-(methylsulfanyl)-alpha-D-ribose 1-phosphate = 5-(methylsulfanyl)-D-ribulose 1-phosphate</text>
        <dbReference type="Rhea" id="RHEA:19989"/>
        <dbReference type="ChEBI" id="CHEBI:58533"/>
        <dbReference type="ChEBI" id="CHEBI:58548"/>
        <dbReference type="EC" id="5.3.1.23"/>
    </reaction>
</comment>
<comment type="pathway">
    <text evidence="1">Amino-acid biosynthesis; L-methionine biosynthesis via salvage pathway; L-methionine from S-methyl-5-thio-alpha-D-ribose 1-phosphate: step 1/6.</text>
</comment>
<comment type="subunit">
    <text>Homodimer.</text>
</comment>
<comment type="similarity">
    <text evidence="2">Belongs to the eIF-2B alpha/beta/delta subunits family. MtnA subfamily.</text>
</comment>
<reference key="1">
    <citation type="journal article" date="2007" name="PLoS ONE">
        <title>Paradoxical DNA repair and peroxide resistance gene conservation in Bacillus pumilus SAFR-032.</title>
        <authorList>
            <person name="Gioia J."/>
            <person name="Yerrapragada S."/>
            <person name="Qin X."/>
            <person name="Jiang H."/>
            <person name="Igboeli O.C."/>
            <person name="Muzny D."/>
            <person name="Dugan-Rocha S."/>
            <person name="Ding Y."/>
            <person name="Hawes A."/>
            <person name="Liu W."/>
            <person name="Perez L."/>
            <person name="Kovar C."/>
            <person name="Dinh H."/>
            <person name="Lee S."/>
            <person name="Nazareth L."/>
            <person name="Blyth P."/>
            <person name="Holder M."/>
            <person name="Buhay C."/>
            <person name="Tirumalai M.R."/>
            <person name="Liu Y."/>
            <person name="Dasgupta I."/>
            <person name="Bokhetache L."/>
            <person name="Fujita M."/>
            <person name="Karouia F."/>
            <person name="Eswara Moorthy P."/>
            <person name="Siefert J."/>
            <person name="Uzman A."/>
            <person name="Buzumbo P."/>
            <person name="Verma A."/>
            <person name="Zwiya H."/>
            <person name="McWilliams B.D."/>
            <person name="Olowu A."/>
            <person name="Clinkenbeard K.D."/>
            <person name="Newcombe D."/>
            <person name="Golebiewski L."/>
            <person name="Petrosino J.F."/>
            <person name="Nicholson W.L."/>
            <person name="Fox G.E."/>
            <person name="Venkateswaran K."/>
            <person name="Highlander S.K."/>
            <person name="Weinstock G.M."/>
        </authorList>
    </citation>
    <scope>NUCLEOTIDE SEQUENCE [LARGE SCALE GENOMIC DNA]</scope>
    <source>
        <strain>SAFR-032</strain>
    </source>
</reference>
<organism>
    <name type="scientific">Bacillus pumilus (strain SAFR-032)</name>
    <dbReference type="NCBI Taxonomy" id="315750"/>
    <lineage>
        <taxon>Bacteria</taxon>
        <taxon>Bacillati</taxon>
        <taxon>Bacillota</taxon>
        <taxon>Bacilli</taxon>
        <taxon>Bacillales</taxon>
        <taxon>Bacillaceae</taxon>
        <taxon>Bacillus</taxon>
    </lineage>
</organism>
<protein>
    <recommendedName>
        <fullName evidence="1">Methylthioribose-1-phosphate isomerase</fullName>
        <shortName evidence="1">M1Pi</shortName>
        <shortName evidence="1">MTR-1-P isomerase</shortName>
        <ecNumber evidence="1">5.3.1.23</ecNumber>
    </recommendedName>
    <alternativeName>
        <fullName evidence="1">S-methyl-5-thioribose-1-phosphate isomerase</fullName>
    </alternativeName>
</protein>
<keyword id="KW-0028">Amino-acid biosynthesis</keyword>
<keyword id="KW-0413">Isomerase</keyword>
<keyword id="KW-0486">Methionine biosynthesis</keyword>
<accession>A8FCG5</accession>